<reference key="1">
    <citation type="submission" date="2008-06" db="EMBL/GenBank/DDBJ databases">
        <title>Genome and proteome analysis of A. pleuropneumoniae serotype 7.</title>
        <authorList>
            <person name="Linke B."/>
            <person name="Buettner F."/>
            <person name="Martinez-Arias R."/>
            <person name="Goesmann A."/>
            <person name="Baltes N."/>
            <person name="Tegetmeyer H."/>
            <person name="Singh M."/>
            <person name="Gerlach G.F."/>
        </authorList>
    </citation>
    <scope>NUCLEOTIDE SEQUENCE [LARGE SCALE GENOMIC DNA]</scope>
    <source>
        <strain>AP76</strain>
    </source>
</reference>
<keyword id="KW-0687">Ribonucleoprotein</keyword>
<keyword id="KW-0689">Ribosomal protein</keyword>
<keyword id="KW-0694">RNA-binding</keyword>
<keyword id="KW-0699">rRNA-binding</keyword>
<dbReference type="EMBL" id="CP001091">
    <property type="protein sequence ID" value="ACE62507.1"/>
    <property type="molecule type" value="Genomic_DNA"/>
</dbReference>
<dbReference type="RefSeq" id="WP_005619403.1">
    <property type="nucleotide sequence ID" value="NC_010939.1"/>
</dbReference>
<dbReference type="SMR" id="B3GZ21"/>
<dbReference type="GeneID" id="93298799"/>
<dbReference type="KEGG" id="apa:APP7_1855"/>
<dbReference type="HOGENOM" id="CLU_095071_2_1_6"/>
<dbReference type="Proteomes" id="UP000001226">
    <property type="component" value="Chromosome"/>
</dbReference>
<dbReference type="GO" id="GO:0022625">
    <property type="term" value="C:cytosolic large ribosomal subunit"/>
    <property type="evidence" value="ECO:0007669"/>
    <property type="project" value="TreeGrafter"/>
</dbReference>
<dbReference type="GO" id="GO:0070180">
    <property type="term" value="F:large ribosomal subunit rRNA binding"/>
    <property type="evidence" value="ECO:0007669"/>
    <property type="project" value="TreeGrafter"/>
</dbReference>
<dbReference type="GO" id="GO:0003735">
    <property type="term" value="F:structural constituent of ribosome"/>
    <property type="evidence" value="ECO:0007669"/>
    <property type="project" value="InterPro"/>
</dbReference>
<dbReference type="GO" id="GO:0006412">
    <property type="term" value="P:translation"/>
    <property type="evidence" value="ECO:0007669"/>
    <property type="project" value="UniProtKB-UniRule"/>
</dbReference>
<dbReference type="CDD" id="cd00337">
    <property type="entry name" value="Ribosomal_uL14"/>
    <property type="match status" value="1"/>
</dbReference>
<dbReference type="FunFam" id="2.40.150.20:FF:000001">
    <property type="entry name" value="50S ribosomal protein L14"/>
    <property type="match status" value="1"/>
</dbReference>
<dbReference type="Gene3D" id="2.40.150.20">
    <property type="entry name" value="Ribosomal protein L14"/>
    <property type="match status" value="1"/>
</dbReference>
<dbReference type="HAMAP" id="MF_01367">
    <property type="entry name" value="Ribosomal_uL14"/>
    <property type="match status" value="1"/>
</dbReference>
<dbReference type="InterPro" id="IPR000218">
    <property type="entry name" value="Ribosomal_uL14"/>
</dbReference>
<dbReference type="InterPro" id="IPR005745">
    <property type="entry name" value="Ribosomal_uL14_bac-type"/>
</dbReference>
<dbReference type="InterPro" id="IPR019972">
    <property type="entry name" value="Ribosomal_uL14_CS"/>
</dbReference>
<dbReference type="InterPro" id="IPR036853">
    <property type="entry name" value="Ribosomal_uL14_sf"/>
</dbReference>
<dbReference type="NCBIfam" id="TIGR01067">
    <property type="entry name" value="rplN_bact"/>
    <property type="match status" value="1"/>
</dbReference>
<dbReference type="PANTHER" id="PTHR11761">
    <property type="entry name" value="50S/60S RIBOSOMAL PROTEIN L14/L23"/>
    <property type="match status" value="1"/>
</dbReference>
<dbReference type="PANTHER" id="PTHR11761:SF3">
    <property type="entry name" value="LARGE RIBOSOMAL SUBUNIT PROTEIN UL14M"/>
    <property type="match status" value="1"/>
</dbReference>
<dbReference type="Pfam" id="PF00238">
    <property type="entry name" value="Ribosomal_L14"/>
    <property type="match status" value="1"/>
</dbReference>
<dbReference type="SMART" id="SM01374">
    <property type="entry name" value="Ribosomal_L14"/>
    <property type="match status" value="1"/>
</dbReference>
<dbReference type="SUPFAM" id="SSF50193">
    <property type="entry name" value="Ribosomal protein L14"/>
    <property type="match status" value="1"/>
</dbReference>
<dbReference type="PROSITE" id="PS00049">
    <property type="entry name" value="RIBOSOMAL_L14"/>
    <property type="match status" value="1"/>
</dbReference>
<name>RL14_ACTP7</name>
<sequence>MIQEQTMLDVADNSGARSVMCIKVLGGSHRRYAAIGDIIKVTVKEAIPRGKVKKGDVLKAVVVRTKKGVRRPDGSVIRFDGNACVILNNNTEQPIGTRIFGPVTRELRSEKFMKIISLAPEVL</sequence>
<protein>
    <recommendedName>
        <fullName evidence="1">Large ribosomal subunit protein uL14</fullName>
    </recommendedName>
    <alternativeName>
        <fullName evidence="2">50S ribosomal protein L14</fullName>
    </alternativeName>
</protein>
<accession>B3GZ21</accession>
<gene>
    <name evidence="1" type="primary">rplN</name>
    <name type="ordered locus">APP7_1855</name>
</gene>
<feature type="chain" id="PRO_1000144212" description="Large ribosomal subunit protein uL14">
    <location>
        <begin position="1"/>
        <end position="123"/>
    </location>
</feature>
<proteinExistence type="inferred from homology"/>
<evidence type="ECO:0000255" key="1">
    <source>
        <dbReference type="HAMAP-Rule" id="MF_01367"/>
    </source>
</evidence>
<evidence type="ECO:0000305" key="2"/>
<organism>
    <name type="scientific">Actinobacillus pleuropneumoniae serotype 7 (strain AP76)</name>
    <dbReference type="NCBI Taxonomy" id="537457"/>
    <lineage>
        <taxon>Bacteria</taxon>
        <taxon>Pseudomonadati</taxon>
        <taxon>Pseudomonadota</taxon>
        <taxon>Gammaproteobacteria</taxon>
        <taxon>Pasteurellales</taxon>
        <taxon>Pasteurellaceae</taxon>
        <taxon>Actinobacillus</taxon>
    </lineage>
</organism>
<comment type="function">
    <text evidence="1">Binds to 23S rRNA. Forms part of two intersubunit bridges in the 70S ribosome.</text>
</comment>
<comment type="subunit">
    <text evidence="1">Part of the 50S ribosomal subunit. Forms a cluster with proteins L3 and L19. In the 70S ribosome, L14 and L19 interact and together make contacts with the 16S rRNA in bridges B5 and B8.</text>
</comment>
<comment type="similarity">
    <text evidence="1">Belongs to the universal ribosomal protein uL14 family.</text>
</comment>